<evidence type="ECO:0000255" key="1">
    <source>
        <dbReference type="HAMAP-Rule" id="MF_01220"/>
    </source>
</evidence>
<feature type="chain" id="PRO_1000053914" description="Uridylate kinase">
    <location>
        <begin position="1"/>
        <end position="237"/>
    </location>
</feature>
<feature type="region of interest" description="Involved in allosteric activation by GTP" evidence="1">
    <location>
        <begin position="20"/>
        <end position="25"/>
    </location>
</feature>
<feature type="binding site" evidence="1">
    <location>
        <begin position="12"/>
        <end position="15"/>
    </location>
    <ligand>
        <name>ATP</name>
        <dbReference type="ChEBI" id="CHEBI:30616"/>
    </ligand>
</feature>
<feature type="binding site" evidence="1">
    <location>
        <position position="54"/>
    </location>
    <ligand>
        <name>UMP</name>
        <dbReference type="ChEBI" id="CHEBI:57865"/>
    </ligand>
</feature>
<feature type="binding site" evidence="1">
    <location>
        <position position="55"/>
    </location>
    <ligand>
        <name>ATP</name>
        <dbReference type="ChEBI" id="CHEBI:30616"/>
    </ligand>
</feature>
<feature type="binding site" evidence="1">
    <location>
        <position position="59"/>
    </location>
    <ligand>
        <name>ATP</name>
        <dbReference type="ChEBI" id="CHEBI:30616"/>
    </ligand>
</feature>
<feature type="binding site" evidence="1">
    <location>
        <position position="72"/>
    </location>
    <ligand>
        <name>UMP</name>
        <dbReference type="ChEBI" id="CHEBI:57865"/>
    </ligand>
</feature>
<feature type="binding site" evidence="1">
    <location>
        <begin position="133"/>
        <end position="140"/>
    </location>
    <ligand>
        <name>UMP</name>
        <dbReference type="ChEBI" id="CHEBI:57865"/>
    </ligand>
</feature>
<feature type="binding site" evidence="1">
    <location>
        <position position="166"/>
    </location>
    <ligand>
        <name>ATP</name>
        <dbReference type="ChEBI" id="CHEBI:30616"/>
    </ligand>
</feature>
<feature type="binding site" evidence="1">
    <location>
        <position position="169"/>
    </location>
    <ligand>
        <name>ATP</name>
        <dbReference type="ChEBI" id="CHEBI:30616"/>
    </ligand>
</feature>
<name>PYRH_CLOP1</name>
<comment type="function">
    <text evidence="1">Catalyzes the reversible phosphorylation of UMP to UDP.</text>
</comment>
<comment type="catalytic activity">
    <reaction evidence="1">
        <text>UMP + ATP = UDP + ADP</text>
        <dbReference type="Rhea" id="RHEA:24400"/>
        <dbReference type="ChEBI" id="CHEBI:30616"/>
        <dbReference type="ChEBI" id="CHEBI:57865"/>
        <dbReference type="ChEBI" id="CHEBI:58223"/>
        <dbReference type="ChEBI" id="CHEBI:456216"/>
        <dbReference type="EC" id="2.7.4.22"/>
    </reaction>
</comment>
<comment type="activity regulation">
    <text evidence="1">Allosterically activated by GTP. Inhibited by UTP.</text>
</comment>
<comment type="pathway">
    <text evidence="1">Pyrimidine metabolism; CTP biosynthesis via de novo pathway; UDP from UMP (UMPK route): step 1/1.</text>
</comment>
<comment type="subunit">
    <text evidence="1">Homohexamer.</text>
</comment>
<comment type="subcellular location">
    <subcellularLocation>
        <location evidence="1">Cytoplasm</location>
    </subcellularLocation>
</comment>
<comment type="similarity">
    <text evidence="1">Belongs to the UMP kinase family.</text>
</comment>
<accession>Q0TPQ5</accession>
<keyword id="KW-0021">Allosteric enzyme</keyword>
<keyword id="KW-0067">ATP-binding</keyword>
<keyword id="KW-0963">Cytoplasm</keyword>
<keyword id="KW-0418">Kinase</keyword>
<keyword id="KW-0547">Nucleotide-binding</keyword>
<keyword id="KW-0665">Pyrimidine biosynthesis</keyword>
<keyword id="KW-0808">Transferase</keyword>
<organism>
    <name type="scientific">Clostridium perfringens (strain ATCC 13124 / DSM 756 / JCM 1290 / NCIMB 6125 / NCTC 8237 / Type A)</name>
    <dbReference type="NCBI Taxonomy" id="195103"/>
    <lineage>
        <taxon>Bacteria</taxon>
        <taxon>Bacillati</taxon>
        <taxon>Bacillota</taxon>
        <taxon>Clostridia</taxon>
        <taxon>Eubacteriales</taxon>
        <taxon>Clostridiaceae</taxon>
        <taxon>Clostridium</taxon>
    </lineage>
</organism>
<dbReference type="EC" id="2.7.4.22" evidence="1"/>
<dbReference type="EMBL" id="CP000246">
    <property type="protein sequence ID" value="ABG83006.1"/>
    <property type="molecule type" value="Genomic_DNA"/>
</dbReference>
<dbReference type="RefSeq" id="WP_003459788.1">
    <property type="nucleotide sequence ID" value="NC_008261.1"/>
</dbReference>
<dbReference type="SMR" id="Q0TPQ5"/>
<dbReference type="STRING" id="195103.CPF_1952"/>
<dbReference type="PaxDb" id="195103-CPF_1952"/>
<dbReference type="GeneID" id="93001764"/>
<dbReference type="KEGG" id="cpf:CPF_1952"/>
<dbReference type="eggNOG" id="COG0528">
    <property type="taxonomic scope" value="Bacteria"/>
</dbReference>
<dbReference type="HOGENOM" id="CLU_033861_0_0_9"/>
<dbReference type="UniPathway" id="UPA00159">
    <property type="reaction ID" value="UER00275"/>
</dbReference>
<dbReference type="Proteomes" id="UP000001823">
    <property type="component" value="Chromosome"/>
</dbReference>
<dbReference type="GO" id="GO:0005737">
    <property type="term" value="C:cytoplasm"/>
    <property type="evidence" value="ECO:0007669"/>
    <property type="project" value="UniProtKB-SubCell"/>
</dbReference>
<dbReference type="GO" id="GO:0005524">
    <property type="term" value="F:ATP binding"/>
    <property type="evidence" value="ECO:0007669"/>
    <property type="project" value="UniProtKB-KW"/>
</dbReference>
<dbReference type="GO" id="GO:0033862">
    <property type="term" value="F:UMP kinase activity"/>
    <property type="evidence" value="ECO:0007669"/>
    <property type="project" value="UniProtKB-EC"/>
</dbReference>
<dbReference type="GO" id="GO:0044210">
    <property type="term" value="P:'de novo' CTP biosynthetic process"/>
    <property type="evidence" value="ECO:0007669"/>
    <property type="project" value="UniProtKB-UniRule"/>
</dbReference>
<dbReference type="GO" id="GO:0006225">
    <property type="term" value="P:UDP biosynthetic process"/>
    <property type="evidence" value="ECO:0007669"/>
    <property type="project" value="TreeGrafter"/>
</dbReference>
<dbReference type="CDD" id="cd04254">
    <property type="entry name" value="AAK_UMPK-PyrH-Ec"/>
    <property type="match status" value="1"/>
</dbReference>
<dbReference type="FunFam" id="3.40.1160.10:FF:000001">
    <property type="entry name" value="Uridylate kinase"/>
    <property type="match status" value="1"/>
</dbReference>
<dbReference type="Gene3D" id="3.40.1160.10">
    <property type="entry name" value="Acetylglutamate kinase-like"/>
    <property type="match status" value="1"/>
</dbReference>
<dbReference type="HAMAP" id="MF_01220_B">
    <property type="entry name" value="PyrH_B"/>
    <property type="match status" value="1"/>
</dbReference>
<dbReference type="InterPro" id="IPR036393">
    <property type="entry name" value="AceGlu_kinase-like_sf"/>
</dbReference>
<dbReference type="InterPro" id="IPR001048">
    <property type="entry name" value="Asp/Glu/Uridylate_kinase"/>
</dbReference>
<dbReference type="InterPro" id="IPR001057">
    <property type="entry name" value="Glu/AcGlu_kinase"/>
</dbReference>
<dbReference type="InterPro" id="IPR011817">
    <property type="entry name" value="Uridylate_kinase"/>
</dbReference>
<dbReference type="InterPro" id="IPR015963">
    <property type="entry name" value="Uridylate_kinase_bac"/>
</dbReference>
<dbReference type="NCBIfam" id="TIGR02075">
    <property type="entry name" value="pyrH_bact"/>
    <property type="match status" value="1"/>
</dbReference>
<dbReference type="PANTHER" id="PTHR42833">
    <property type="entry name" value="URIDYLATE KINASE"/>
    <property type="match status" value="1"/>
</dbReference>
<dbReference type="PANTHER" id="PTHR42833:SF4">
    <property type="entry name" value="URIDYLATE KINASE PUMPKIN, CHLOROPLASTIC"/>
    <property type="match status" value="1"/>
</dbReference>
<dbReference type="Pfam" id="PF00696">
    <property type="entry name" value="AA_kinase"/>
    <property type="match status" value="1"/>
</dbReference>
<dbReference type="PIRSF" id="PIRSF005650">
    <property type="entry name" value="Uridylate_kin"/>
    <property type="match status" value="1"/>
</dbReference>
<dbReference type="PRINTS" id="PR00474">
    <property type="entry name" value="GLU5KINASE"/>
</dbReference>
<dbReference type="SUPFAM" id="SSF53633">
    <property type="entry name" value="Carbamate kinase-like"/>
    <property type="match status" value="1"/>
</dbReference>
<protein>
    <recommendedName>
        <fullName evidence="1">Uridylate kinase</fullName>
        <shortName evidence="1">UK</shortName>
        <ecNumber evidence="1">2.7.4.22</ecNumber>
    </recommendedName>
    <alternativeName>
        <fullName evidence="1">Uridine monophosphate kinase</fullName>
        <shortName evidence="1">UMP kinase</shortName>
        <shortName evidence="1">UMPK</shortName>
    </alternativeName>
</protein>
<reference key="1">
    <citation type="journal article" date="2006" name="Genome Res.">
        <title>Skewed genomic variability in strains of the toxigenic bacterial pathogen, Clostridium perfringens.</title>
        <authorList>
            <person name="Myers G.S.A."/>
            <person name="Rasko D.A."/>
            <person name="Cheung J.K."/>
            <person name="Ravel J."/>
            <person name="Seshadri R."/>
            <person name="DeBoy R.T."/>
            <person name="Ren Q."/>
            <person name="Varga J."/>
            <person name="Awad M.M."/>
            <person name="Brinkac L.M."/>
            <person name="Daugherty S.C."/>
            <person name="Haft D.H."/>
            <person name="Dodson R.J."/>
            <person name="Madupu R."/>
            <person name="Nelson W.C."/>
            <person name="Rosovitz M.J."/>
            <person name="Sullivan S.A."/>
            <person name="Khouri H."/>
            <person name="Dimitrov G.I."/>
            <person name="Watkins K.L."/>
            <person name="Mulligan S."/>
            <person name="Benton J."/>
            <person name="Radune D."/>
            <person name="Fisher D.J."/>
            <person name="Atkins H.S."/>
            <person name="Hiscox T."/>
            <person name="Jost B.H."/>
            <person name="Billington S.J."/>
            <person name="Songer J.G."/>
            <person name="McClane B.A."/>
            <person name="Titball R.W."/>
            <person name="Rood J.I."/>
            <person name="Melville S.B."/>
            <person name="Paulsen I.T."/>
        </authorList>
    </citation>
    <scope>NUCLEOTIDE SEQUENCE [LARGE SCALE GENOMIC DNA]</scope>
    <source>
        <strain>ATCC 13124 / DSM 756 / JCM 1290 / NCIMB 6125 / NCTC 8237 / S 107 / Type A</strain>
    </source>
</reference>
<proteinExistence type="inferred from homology"/>
<sequence length="237" mass="25785">MGTCKYKRVMLKLSGEALAGENGFGIDFNIAMNIAKAVKELVDMGIEVGAVVGGGNIWRGRSGEGMDRTTADYMGMLATSINALALQDSLESLGVDTRVQTAIEMKEIAEPYIRRRAMRHLEKGRVVIFGAGTGNPYFSTDTAAALRAAEIEADVILLAKKVDGVYDKDPHKYDDAKKYDELSYIEVLEQGLQVMDSTATSLCMDNNIPILVFALDNPENIKRVVLGENIGTIVSKK</sequence>
<gene>
    <name evidence="1" type="primary">pyrH</name>
    <name type="ordered locus">CPF_1952</name>
</gene>